<name>POL2_BAYMG</name>
<dbReference type="EC" id="3.4.22.45"/>
<dbReference type="EMBL" id="D01099">
    <property type="protein sequence ID" value="BAA00884.1"/>
    <property type="molecule type" value="Genomic_RNA"/>
</dbReference>
<dbReference type="PIR" id="JQ1947">
    <property type="entry name" value="JQ1947"/>
</dbReference>
<dbReference type="SMR" id="Q01365"/>
<dbReference type="MEROPS" id="C06.002"/>
<dbReference type="Proteomes" id="UP000007446">
    <property type="component" value="Genome"/>
</dbReference>
<dbReference type="GO" id="GO:0004197">
    <property type="term" value="F:cysteine-type endopeptidase activity"/>
    <property type="evidence" value="ECO:0007669"/>
    <property type="project" value="InterPro"/>
</dbReference>
<dbReference type="GO" id="GO:0005198">
    <property type="term" value="F:structural molecule activity"/>
    <property type="evidence" value="ECO:0007669"/>
    <property type="project" value="InterPro"/>
</dbReference>
<dbReference type="GO" id="GO:0006508">
    <property type="term" value="P:proteolysis"/>
    <property type="evidence" value="ECO:0007669"/>
    <property type="project" value="UniProtKB-KW"/>
</dbReference>
<dbReference type="Gene3D" id="3.90.70.150">
    <property type="entry name" value="Helper component proteinase"/>
    <property type="match status" value="1"/>
</dbReference>
<dbReference type="Gene3D" id="1.20.120.70">
    <property type="entry name" value="Tobacco mosaic virus-like, coat protein"/>
    <property type="match status" value="1"/>
</dbReference>
<dbReference type="InterPro" id="IPR001456">
    <property type="entry name" value="HC-pro"/>
</dbReference>
<dbReference type="InterPro" id="IPR031159">
    <property type="entry name" value="HC_PRO_CPD_dom"/>
</dbReference>
<dbReference type="InterPro" id="IPR042308">
    <property type="entry name" value="HC_PRO_CPD_sf"/>
</dbReference>
<dbReference type="InterPro" id="IPR001337">
    <property type="entry name" value="TMV-like_coat"/>
</dbReference>
<dbReference type="InterPro" id="IPR036417">
    <property type="entry name" value="TMV-like_coat_sf"/>
</dbReference>
<dbReference type="Pfam" id="PF00851">
    <property type="entry name" value="Peptidase_C6"/>
    <property type="match status" value="1"/>
</dbReference>
<dbReference type="Pfam" id="PF00721">
    <property type="entry name" value="TMV_coat"/>
    <property type="match status" value="1"/>
</dbReference>
<dbReference type="SUPFAM" id="SSF47195">
    <property type="entry name" value="TMV-like viral coat proteins"/>
    <property type="match status" value="1"/>
</dbReference>
<dbReference type="PROSITE" id="PS51744">
    <property type="entry name" value="HC_PRO_CPD"/>
    <property type="match status" value="1"/>
</dbReference>
<gene>
    <name type="primary">RNA2</name>
</gene>
<proteinExistence type="inferred from homology"/>
<reference key="1">
    <citation type="journal article" date="1991" name="J. Gen. Virol.">
        <title>The nucleotide sequence of RNA 2 of barley yellow mosaic virus.</title>
        <authorList>
            <person name="Davidson A.D."/>
            <person name="Proels M."/>
            <person name="Schell J."/>
            <person name="Steinbiss H.H."/>
        </authorList>
    </citation>
    <scope>NUCLEOTIDE SEQUENCE [GENOMIC RNA]</scope>
</reference>
<comment type="catalytic activity">
    <reaction>
        <text>Hydrolyzes a Gly-|-Gly bond at its own C-terminus, commonly in the sequence -Tyr-Xaa-Val-Gly-|-Gly, in the processing of the potyviral polyprotein.</text>
        <dbReference type="EC" id="3.4.22.45"/>
    </reaction>
</comment>
<comment type="PTM">
    <text evidence="4">The viral RNA2 of bymoviruses is expressed as a single polyprotein which undergoes post-translational proteolytic processing resulting in the production of at least two individual proteins. The HC-pro cleaves its C-terminus autocatalytically (Potential).</text>
</comment>
<comment type="similarity">
    <text evidence="4">Belongs to the bymoviruses polyprotein 2 family.</text>
</comment>
<organism>
    <name type="scientific">Barley yellow mosaic virus (isolate Germany)</name>
    <name type="common">BaYMV</name>
    <dbReference type="NCBI Taxonomy" id="31728"/>
    <lineage>
        <taxon>Viruses</taxon>
        <taxon>Riboviria</taxon>
        <taxon>Orthornavirae</taxon>
        <taxon>Pisuviricota</taxon>
        <taxon>Stelpaviricetes</taxon>
        <taxon>Patatavirales</taxon>
        <taxon>Potyviridae</taxon>
        <taxon>Bymovirus</taxon>
        <taxon>Barley yellow mosaic virus</taxon>
    </lineage>
</organism>
<sequence length="890" mass="98204">MSTSSSRLFFDCGSLDWPNKSLFGDPTTRDVMDEHISSTWNAVIRRHMLAPNADAETILGRDGLPSAQFDAYGAMLPSFIQALNAPTTRLRISAPLSTAESILCADASHAPWLYMANSVCAYEATHLQPVQTFIAFNFAHGYCYLSLFIPLSFRITPENARSFSRFLEQLPDILGAYPTLASLYKTMLFAVRLFPEVLQAPIPIIAKRPGVLQFHVSDARGLPPSWFPMKCGSVASFIALITNNLNSDLLNGIVGSNGDGEHYTNWNSGHNHWIVNRFITVKDLHSSLKSALEVDLDTEGGRNAVLDLLLDLGVTNLVRREKRFPAYFQGAESVYLLLSCERVGNELVAVQDALQEPLANYTGKDLRALIINLGGLPSRHPEICYTRNIFENDNHLVWNFEFYRIASITKNAQIDRDVLSSSMANLFSDFVSESSNGEYRVKEPRPVTQYRVEHDEPVASGAPSAWWQVLVGITTAILGAIIFFLWRCFLRAKRVKFQAKDSFPWFTTSGDDDLPPPPGDSPSRPPGRSPDRVLPRTVVRDLSFNDDDDLHSVDLNEAGSRFGEVVSLIARGNLRELAGAIPESLSNLTLLQTSASGSGFYTMVALYLATLGDAITAFHEHNDASPATIQSLRTLELQLEARGLRFNEAGTPANLIQRGVKSSVGRALVRLTQSALLATGENFRTRMAATLERIAAERLNTLTAYDQRVIEMTTELLAAIKTALEVERSELTPHLANAEALLQVYNNLFSTDYASASLLALRREMILRSAEGRVGEQPTSASDAANEELVQRSMTKLDKEIELFQAQIDSQRRAVTITEASNLRENILQPINTVANIAMAGAFLRGGARHRMPGIPDVAAPMSNPFRAFSGRGHSLTTTRGAGLFRRPRV</sequence>
<evidence type="ECO:0000255" key="1"/>
<evidence type="ECO:0000255" key="2">
    <source>
        <dbReference type="PROSITE-ProRule" id="PRU01080"/>
    </source>
</evidence>
<evidence type="ECO:0000256" key="3">
    <source>
        <dbReference type="SAM" id="MobiDB-lite"/>
    </source>
</evidence>
<evidence type="ECO:0000305" key="4"/>
<accession>Q01365</accession>
<protein>
    <recommendedName>
        <fullName>Genome polyprotein 2</fullName>
    </recommendedName>
    <component>
        <recommendedName>
            <fullName>Helper component proteinase</fullName>
            <shortName>HC-pro</shortName>
            <ecNumber>3.4.22.45</ecNumber>
        </recommendedName>
    </component>
    <component>
        <recommendedName>
            <fullName>70 kDa protein</fullName>
        </recommendedName>
    </component>
</protein>
<keyword id="KW-0378">Hydrolase</keyword>
<keyword id="KW-0645">Protease</keyword>
<keyword id="KW-0788">Thiol protease</keyword>
<feature type="chain" id="PRO_0000040554" description="Helper component proteinase" evidence="1">
    <location>
        <begin position="1"/>
        <end position="255"/>
    </location>
</feature>
<feature type="chain" id="PRO_0000040555" description="70 kDa protein">
    <location>
        <begin position="256"/>
        <end position="890"/>
    </location>
</feature>
<feature type="domain" description="Peptidase C6" evidence="2">
    <location>
        <begin position="135"/>
        <end position="255"/>
    </location>
</feature>
<feature type="region of interest" description="Disordered" evidence="3">
    <location>
        <begin position="508"/>
        <end position="533"/>
    </location>
</feature>
<feature type="compositionally biased region" description="Pro residues" evidence="3">
    <location>
        <begin position="515"/>
        <end position="528"/>
    </location>
</feature>
<feature type="active site" description="For helper component proteinase activity" evidence="2">
    <location>
        <position position="143"/>
    </location>
</feature>
<feature type="active site" description="For helper component proteinase activity" evidence="2">
    <location>
        <position position="215"/>
    </location>
</feature>
<feature type="site" description="Cleavage; by autolysis" evidence="2">
    <location>
        <begin position="255"/>
        <end position="256"/>
    </location>
</feature>
<organismHost>
    <name type="scientific">Hordeum vulgare</name>
    <name type="common">Barley</name>
    <dbReference type="NCBI Taxonomy" id="4513"/>
</organismHost>